<evidence type="ECO:0000250" key="1">
    <source>
        <dbReference type="UniProtKB" id="Q9SXE9"/>
    </source>
</evidence>
<evidence type="ECO:0000256" key="2">
    <source>
        <dbReference type="SAM" id="MobiDB-lite"/>
    </source>
</evidence>
<evidence type="ECO:0000269" key="3">
    <source>
    </source>
</evidence>
<evidence type="ECO:0000303" key="4">
    <source>
    </source>
</evidence>
<evidence type="ECO:0000305" key="5"/>
<evidence type="ECO:0000312" key="6">
    <source>
        <dbReference type="Araport" id="AT1G12080"/>
    </source>
</evidence>
<evidence type="ECO:0000312" key="7">
    <source>
        <dbReference type="EMBL" id="AAC17608.1"/>
    </source>
</evidence>
<name>CCAP2_ARATH</name>
<dbReference type="EMBL" id="AC002131">
    <property type="protein sequence ID" value="AAC17608.1"/>
    <property type="molecule type" value="Genomic_DNA"/>
</dbReference>
<dbReference type="EMBL" id="CP002684">
    <property type="protein sequence ID" value="AEE28834.1"/>
    <property type="molecule type" value="Genomic_DNA"/>
</dbReference>
<dbReference type="EMBL" id="CP002684">
    <property type="protein sequence ID" value="AEE28835.1"/>
    <property type="molecule type" value="Genomic_DNA"/>
</dbReference>
<dbReference type="EMBL" id="AY140106">
    <property type="protein sequence ID" value="AAM98247.1"/>
    <property type="molecule type" value="mRNA"/>
</dbReference>
<dbReference type="EMBL" id="BT006536">
    <property type="protein sequence ID" value="AAP21344.1"/>
    <property type="molecule type" value="mRNA"/>
</dbReference>
<dbReference type="EMBL" id="AY086722">
    <property type="protein sequence ID" value="AAM63775.1"/>
    <property type="molecule type" value="mRNA"/>
</dbReference>
<dbReference type="RefSeq" id="NP_563898.1">
    <molecule id="O65370-2"/>
    <property type="nucleotide sequence ID" value="NM_101080.2"/>
</dbReference>
<dbReference type="RefSeq" id="NP_849650.1">
    <molecule id="O65370-1"/>
    <property type="nucleotide sequence ID" value="NM_179319.5"/>
</dbReference>
<dbReference type="FunCoup" id="O65370">
    <property type="interactions" value="24"/>
</dbReference>
<dbReference type="STRING" id="3702.O65370"/>
<dbReference type="iPTMnet" id="O65370"/>
<dbReference type="PaxDb" id="3702-AT1G12080.2"/>
<dbReference type="ProteomicsDB" id="177224"/>
<dbReference type="ProteomicsDB" id="191951"/>
<dbReference type="EnsemblPlants" id="AT1G12080.1">
    <molecule id="O65370-2"/>
    <property type="protein sequence ID" value="AT1G12080.1"/>
    <property type="gene ID" value="AT1G12080"/>
</dbReference>
<dbReference type="EnsemblPlants" id="AT1G12080.2">
    <molecule id="O65370-1"/>
    <property type="protein sequence ID" value="AT1G12080.2"/>
    <property type="gene ID" value="AT1G12080"/>
</dbReference>
<dbReference type="GeneID" id="837760"/>
<dbReference type="Gramene" id="AT1G12080.1">
    <molecule id="O65370-2"/>
    <property type="protein sequence ID" value="AT1G12080.1"/>
    <property type="gene ID" value="AT1G12080"/>
</dbReference>
<dbReference type="Gramene" id="AT1G12080.2">
    <molecule id="O65370-1"/>
    <property type="protein sequence ID" value="AT1G12080.2"/>
    <property type="gene ID" value="AT1G12080"/>
</dbReference>
<dbReference type="KEGG" id="ath:AT1G12080"/>
<dbReference type="Araport" id="AT1G12080"/>
<dbReference type="TAIR" id="AT1G12080"/>
<dbReference type="HOGENOM" id="CLU_154106_0_0_1"/>
<dbReference type="OMA" id="GPNTSQH"/>
<dbReference type="PRO" id="PR:O65370"/>
<dbReference type="Proteomes" id="UP000006548">
    <property type="component" value="Chromosome 1"/>
</dbReference>
<dbReference type="ExpressionAtlas" id="O65370">
    <property type="expression patterns" value="baseline and differential"/>
</dbReference>
<dbReference type="GO" id="GO:0005829">
    <property type="term" value="C:cytosol"/>
    <property type="evidence" value="ECO:0000314"/>
    <property type="project" value="UniProtKB"/>
</dbReference>
<dbReference type="GO" id="GO:0005576">
    <property type="term" value="C:extracellular region"/>
    <property type="evidence" value="ECO:0007005"/>
    <property type="project" value="TAIR"/>
</dbReference>
<dbReference type="GO" id="GO:0009738">
    <property type="term" value="P:abscisic acid-activated signaling pathway"/>
    <property type="evidence" value="ECO:0007669"/>
    <property type="project" value="UniProtKB-KW"/>
</dbReference>
<dbReference type="GO" id="GO:0071370">
    <property type="term" value="P:cellular response to gibberellin stimulus"/>
    <property type="evidence" value="ECO:0000270"/>
    <property type="project" value="UniProtKB"/>
</dbReference>
<dbReference type="GO" id="GO:0043617">
    <property type="term" value="P:cellular response to sucrose starvation"/>
    <property type="evidence" value="ECO:0000270"/>
    <property type="project" value="UniProtKB"/>
</dbReference>
<dbReference type="GO" id="GO:0009646">
    <property type="term" value="P:response to absence of light"/>
    <property type="evidence" value="ECO:0000270"/>
    <property type="project" value="UniProtKB"/>
</dbReference>
<dbReference type="GO" id="GO:0051592">
    <property type="term" value="P:response to calcium ion"/>
    <property type="evidence" value="ECO:0000270"/>
    <property type="project" value="UniProtKB"/>
</dbReference>
<dbReference type="GO" id="GO:0009409">
    <property type="term" value="P:response to cold"/>
    <property type="evidence" value="ECO:0000270"/>
    <property type="project" value="UniProtKB"/>
</dbReference>
<dbReference type="GO" id="GO:0009749">
    <property type="term" value="P:response to glucose"/>
    <property type="evidence" value="ECO:0000270"/>
    <property type="project" value="UniProtKB"/>
</dbReference>
<dbReference type="GO" id="GO:0010555">
    <property type="term" value="P:response to mannitol"/>
    <property type="evidence" value="ECO:0000270"/>
    <property type="project" value="UniProtKB"/>
</dbReference>
<dbReference type="GO" id="GO:0010038">
    <property type="term" value="P:response to metal ion"/>
    <property type="evidence" value="ECO:0000270"/>
    <property type="project" value="UniProtKB"/>
</dbReference>
<dbReference type="GO" id="GO:0002237">
    <property type="term" value="P:response to molecule of bacterial origin"/>
    <property type="evidence" value="ECO:0000270"/>
    <property type="project" value="UniProtKB"/>
</dbReference>
<dbReference type="GO" id="GO:1902074">
    <property type="term" value="P:response to salt"/>
    <property type="evidence" value="ECO:0000270"/>
    <property type="project" value="UniProtKB"/>
</dbReference>
<dbReference type="GO" id="GO:0072708">
    <property type="term" value="P:response to sorbitol"/>
    <property type="evidence" value="ECO:0000270"/>
    <property type="project" value="UniProtKB"/>
</dbReference>
<gene>
    <name evidence="4" type="primary">CCaP2</name>
    <name evidence="6" type="ordered locus">At1g12080</name>
    <name evidence="7" type="ORF">F12F1.4</name>
</gene>
<protein>
    <recommendedName>
        <fullName evidence="4">Cytosolic calcium-binding protein 2</fullName>
        <shortName evidence="4">Cytosolic Ca(2+)-binding protein 2</shortName>
    </recommendedName>
</protein>
<reference key="1">
    <citation type="journal article" date="2000" name="Nature">
        <title>Sequence and analysis of chromosome 1 of the plant Arabidopsis thaliana.</title>
        <authorList>
            <person name="Theologis A."/>
            <person name="Ecker J.R."/>
            <person name="Palm C.J."/>
            <person name="Federspiel N.A."/>
            <person name="Kaul S."/>
            <person name="White O."/>
            <person name="Alonso J."/>
            <person name="Altafi H."/>
            <person name="Araujo R."/>
            <person name="Bowman C.L."/>
            <person name="Brooks S.Y."/>
            <person name="Buehler E."/>
            <person name="Chan A."/>
            <person name="Chao Q."/>
            <person name="Chen H."/>
            <person name="Cheuk R.F."/>
            <person name="Chin C.W."/>
            <person name="Chung M.K."/>
            <person name="Conn L."/>
            <person name="Conway A.B."/>
            <person name="Conway A.R."/>
            <person name="Creasy T.H."/>
            <person name="Dewar K."/>
            <person name="Dunn P."/>
            <person name="Etgu P."/>
            <person name="Feldblyum T.V."/>
            <person name="Feng J.-D."/>
            <person name="Fong B."/>
            <person name="Fujii C.Y."/>
            <person name="Gill J.E."/>
            <person name="Goldsmith A.D."/>
            <person name="Haas B."/>
            <person name="Hansen N.F."/>
            <person name="Hughes B."/>
            <person name="Huizar L."/>
            <person name="Hunter J.L."/>
            <person name="Jenkins J."/>
            <person name="Johnson-Hopson C."/>
            <person name="Khan S."/>
            <person name="Khaykin E."/>
            <person name="Kim C.J."/>
            <person name="Koo H.L."/>
            <person name="Kremenetskaia I."/>
            <person name="Kurtz D.B."/>
            <person name="Kwan A."/>
            <person name="Lam B."/>
            <person name="Langin-Hooper S."/>
            <person name="Lee A."/>
            <person name="Lee J.M."/>
            <person name="Lenz C.A."/>
            <person name="Li J.H."/>
            <person name="Li Y.-P."/>
            <person name="Lin X."/>
            <person name="Liu S.X."/>
            <person name="Liu Z.A."/>
            <person name="Luros J.S."/>
            <person name="Maiti R."/>
            <person name="Marziali A."/>
            <person name="Militscher J."/>
            <person name="Miranda M."/>
            <person name="Nguyen M."/>
            <person name="Nierman W.C."/>
            <person name="Osborne B.I."/>
            <person name="Pai G."/>
            <person name="Peterson J."/>
            <person name="Pham P.K."/>
            <person name="Rizzo M."/>
            <person name="Rooney T."/>
            <person name="Rowley D."/>
            <person name="Sakano H."/>
            <person name="Salzberg S.L."/>
            <person name="Schwartz J.R."/>
            <person name="Shinn P."/>
            <person name="Southwick A.M."/>
            <person name="Sun H."/>
            <person name="Tallon L.J."/>
            <person name="Tambunga G."/>
            <person name="Toriumi M.J."/>
            <person name="Town C.D."/>
            <person name="Utterback T."/>
            <person name="Van Aken S."/>
            <person name="Vaysberg M."/>
            <person name="Vysotskaia V.S."/>
            <person name="Walker M."/>
            <person name="Wu D."/>
            <person name="Yu G."/>
            <person name="Fraser C.M."/>
            <person name="Venter J.C."/>
            <person name="Davis R.W."/>
        </authorList>
    </citation>
    <scope>NUCLEOTIDE SEQUENCE [LARGE SCALE GENOMIC DNA]</scope>
    <source>
        <strain>cv. Columbia</strain>
    </source>
</reference>
<reference key="2">
    <citation type="journal article" date="2017" name="Plant J.">
        <title>Araport11: a complete reannotation of the Arabidopsis thaliana reference genome.</title>
        <authorList>
            <person name="Cheng C.Y."/>
            <person name="Krishnakumar V."/>
            <person name="Chan A.P."/>
            <person name="Thibaud-Nissen F."/>
            <person name="Schobel S."/>
            <person name="Town C.D."/>
        </authorList>
    </citation>
    <scope>GENOME REANNOTATION</scope>
    <source>
        <strain>cv. Columbia</strain>
    </source>
</reference>
<reference key="3">
    <citation type="journal article" date="2003" name="Science">
        <title>Empirical analysis of transcriptional activity in the Arabidopsis genome.</title>
        <authorList>
            <person name="Yamada K."/>
            <person name="Lim J."/>
            <person name="Dale J.M."/>
            <person name="Chen H."/>
            <person name="Shinn P."/>
            <person name="Palm C.J."/>
            <person name="Southwick A.M."/>
            <person name="Wu H.C."/>
            <person name="Kim C.J."/>
            <person name="Nguyen M."/>
            <person name="Pham P.K."/>
            <person name="Cheuk R.F."/>
            <person name="Karlin-Newmann G."/>
            <person name="Liu S.X."/>
            <person name="Lam B."/>
            <person name="Sakano H."/>
            <person name="Wu T."/>
            <person name="Yu G."/>
            <person name="Miranda M."/>
            <person name="Quach H.L."/>
            <person name="Tripp M."/>
            <person name="Chang C.H."/>
            <person name="Lee J.M."/>
            <person name="Toriumi M.J."/>
            <person name="Chan M.M."/>
            <person name="Tang C.C."/>
            <person name="Onodera C.S."/>
            <person name="Deng J.M."/>
            <person name="Akiyama K."/>
            <person name="Ansari Y."/>
            <person name="Arakawa T."/>
            <person name="Banh J."/>
            <person name="Banno F."/>
            <person name="Bowser L."/>
            <person name="Brooks S.Y."/>
            <person name="Carninci P."/>
            <person name="Chao Q."/>
            <person name="Choy N."/>
            <person name="Enju A."/>
            <person name="Goldsmith A.D."/>
            <person name="Gurjal M."/>
            <person name="Hansen N.F."/>
            <person name="Hayashizaki Y."/>
            <person name="Johnson-Hopson C."/>
            <person name="Hsuan V.W."/>
            <person name="Iida K."/>
            <person name="Karnes M."/>
            <person name="Khan S."/>
            <person name="Koesema E."/>
            <person name="Ishida J."/>
            <person name="Jiang P.X."/>
            <person name="Jones T."/>
            <person name="Kawai J."/>
            <person name="Kamiya A."/>
            <person name="Meyers C."/>
            <person name="Nakajima M."/>
            <person name="Narusaka M."/>
            <person name="Seki M."/>
            <person name="Sakurai T."/>
            <person name="Satou M."/>
            <person name="Tamse R."/>
            <person name="Vaysberg M."/>
            <person name="Wallender E.K."/>
            <person name="Wong C."/>
            <person name="Yamamura Y."/>
            <person name="Yuan S."/>
            <person name="Shinozaki K."/>
            <person name="Davis R.W."/>
            <person name="Theologis A."/>
            <person name="Ecker J.R."/>
        </authorList>
    </citation>
    <scope>NUCLEOTIDE SEQUENCE [LARGE SCALE MRNA] (ISOFORM 1)</scope>
    <source>
        <strain>cv. Columbia</strain>
    </source>
</reference>
<reference key="4">
    <citation type="submission" date="2002-03" db="EMBL/GenBank/DDBJ databases">
        <title>Full-length cDNA from Arabidopsis thaliana.</title>
        <authorList>
            <person name="Brover V.V."/>
            <person name="Troukhan M.E."/>
            <person name="Alexandrov N.A."/>
            <person name="Lu Y.-P."/>
            <person name="Flavell R.B."/>
            <person name="Feldmann K.A."/>
        </authorList>
    </citation>
    <scope>NUCLEOTIDE SEQUENCE [LARGE SCALE MRNA] (ISOFORM 2)</scope>
</reference>
<reference key="5">
    <citation type="journal article" date="2007" name="Plant Cell Physiol.">
        <title>Transcriptional induction of two genes for CCaPs, novel cytosolic proteins, in Arabidopsis thaliana in the dark.</title>
        <authorList>
            <person name="Ide Y."/>
            <person name="Tomioka R."/>
            <person name="Ouchi Y."/>
            <person name="Kamiya T."/>
            <person name="Maeshima M."/>
        </authorList>
    </citation>
    <scope>INDUCTION BY DARKNESS AND SUGARS</scope>
    <scope>SUBCELLULAR LOCATION</scope>
    <scope>TISSUE SPECIFICITY</scope>
</reference>
<reference key="6">
    <citation type="journal article" date="2012" name="Mol. Cell. Proteomics">
        <title>Comparative large-scale characterisation of plant vs. mammal proteins reveals similar and idiosyncratic N-alpha acetylation features.</title>
        <authorList>
            <person name="Bienvenut W.V."/>
            <person name="Sumpton D."/>
            <person name="Martinez A."/>
            <person name="Lilla S."/>
            <person name="Espagne C."/>
            <person name="Meinnel T."/>
            <person name="Giglione C."/>
        </authorList>
    </citation>
    <scope>IDENTIFICATION BY MASS SPECTROMETRY [LARGE SCALE ANALYSIS]</scope>
</reference>
<keyword id="KW-0938">Abscisic acid signaling pathway</keyword>
<keyword id="KW-0025">Alternative splicing</keyword>
<keyword id="KW-0106">Calcium</keyword>
<keyword id="KW-0963">Cytoplasm</keyword>
<keyword id="KW-1185">Reference proteome</keyword>
<keyword id="KW-0677">Repeat</keyword>
<sequence length="138" mass="15382">MATVEVEQVTPVAVENVEVPTKTVEETVVETEVTQQPEESVPAVTEQKSEAPIVETNEEVVVEEAEKKDEETEKKTEEKDEKTEVITETPVVEEEEKKAEEVTETPAVVEEEKKTEVVEEKQTEVAAAEEVAVEKAEE</sequence>
<proteinExistence type="evidence at protein level"/>
<feature type="chain" id="PRO_0000458763" description="Cytosolic calcium-binding protein 2">
    <location>
        <begin position="1"/>
        <end position="138"/>
    </location>
</feature>
<feature type="repeat" description="1" evidence="5">
    <location>
        <begin position="62"/>
        <end position="68"/>
    </location>
</feature>
<feature type="repeat" description="2" evidence="5">
    <location>
        <begin position="71"/>
        <end position="75"/>
    </location>
</feature>
<feature type="repeat" description="3" evidence="5">
    <location>
        <begin position="92"/>
        <end position="98"/>
    </location>
</feature>
<feature type="repeat" description="4" evidence="5">
    <location>
        <begin position="109"/>
        <end position="114"/>
    </location>
</feature>
<feature type="repeat" description="5" evidence="5">
    <location>
        <begin position="118"/>
        <end position="122"/>
    </location>
</feature>
<feature type="repeat" description="6" evidence="5">
    <location>
        <begin position="131"/>
        <end position="135"/>
    </location>
</feature>
<feature type="region of interest" description="Disordered" evidence="2">
    <location>
        <begin position="31"/>
        <end position="122"/>
    </location>
</feature>
<feature type="region of interest" description="6 X 5 AA approximate repeats of V-E-E-K-K" evidence="5">
    <location>
        <begin position="62"/>
        <end position="135"/>
    </location>
</feature>
<feature type="compositionally biased region" description="Low complexity" evidence="2">
    <location>
        <begin position="31"/>
        <end position="41"/>
    </location>
</feature>
<feature type="compositionally biased region" description="Basic and acidic residues" evidence="2">
    <location>
        <begin position="64"/>
        <end position="85"/>
    </location>
</feature>
<feature type="compositionally biased region" description="Basic and acidic residues" evidence="2">
    <location>
        <begin position="110"/>
        <end position="122"/>
    </location>
</feature>
<feature type="splice variant" id="VSP_061967" description="In isoform 2.">
    <location>
        <begin position="32"/>
        <end position="65"/>
    </location>
</feature>
<comment type="function">
    <text evidence="1">Binds calcium Ca(2+) and may act as a signal mediator to buffer Ca(2+).</text>
</comment>
<comment type="subcellular location">
    <subcellularLocation>
        <location evidence="3">Cytoplasm</location>
        <location evidence="3">Cytosol</location>
    </subcellularLocation>
</comment>
<comment type="alternative products">
    <event type="alternative splicing"/>
    <isoform>
        <id>O65370-1</id>
        <name>1</name>
        <sequence type="displayed"/>
    </isoform>
    <isoform>
        <id>O65370-2</id>
        <name>2</name>
        <sequence type="described" ref="VSP_061967"/>
    </isoform>
</comment>
<comment type="tissue specificity">
    <text evidence="3">Predominantly expressed in roots (e.g. in endodermis in the stele) and stems, to a lower extent in shoots, flowers and siliques, and, at low levels, in leaves.</text>
</comment>
<comment type="induction">
    <text evidence="3">Levels follow a circadian cycle with higher levels during the night and lower levels in light phases (PubMed:17145720). Accumulates in darkness within 24 hours, but repressed by light and the product of photosynthesis (e.g. sucrose) (PubMed:17145720). Induced by sucrose depletion, but activated by glucose, mannitol or sorbitol (PubMed:17145720). Triggered by gibberellic acid (GA) and salt stresses (e.g. NaCl and KCl) (PubMed:17145720). Suppressed by a high concentration of calcium Ca(2+) and of other metal ions, including magnesium, cadmium, manganese, nickel and zinc (PubMed:17145720). Up-regulated by cold treatment (e.g. transfert from 22 to 4 degrees Celsius) (PubMed:17145720). Down-regulated by flagellin peptide flg22 (PubMed:17145720).</text>
</comment>
<accession>O65370</accession>
<accession>Q8LC93</accession>
<organism>
    <name type="scientific">Arabidopsis thaliana</name>
    <name type="common">Mouse-ear cress</name>
    <dbReference type="NCBI Taxonomy" id="3702"/>
    <lineage>
        <taxon>Eukaryota</taxon>
        <taxon>Viridiplantae</taxon>
        <taxon>Streptophyta</taxon>
        <taxon>Embryophyta</taxon>
        <taxon>Tracheophyta</taxon>
        <taxon>Spermatophyta</taxon>
        <taxon>Magnoliopsida</taxon>
        <taxon>eudicotyledons</taxon>
        <taxon>Gunneridae</taxon>
        <taxon>Pentapetalae</taxon>
        <taxon>rosids</taxon>
        <taxon>malvids</taxon>
        <taxon>Brassicales</taxon>
        <taxon>Brassicaceae</taxon>
        <taxon>Camelineae</taxon>
        <taxon>Arabidopsis</taxon>
    </lineage>
</organism>